<organism>
    <name type="scientific">Azotobacter vinelandii (strain DJ / ATCC BAA-1303)</name>
    <dbReference type="NCBI Taxonomy" id="322710"/>
    <lineage>
        <taxon>Bacteria</taxon>
        <taxon>Pseudomonadati</taxon>
        <taxon>Pseudomonadota</taxon>
        <taxon>Gammaproteobacteria</taxon>
        <taxon>Pseudomonadales</taxon>
        <taxon>Pseudomonadaceae</taxon>
        <taxon>Azotobacter</taxon>
    </lineage>
</organism>
<accession>C1DHH0</accession>
<feature type="chain" id="PRO_1000215890" description="Methylthioribulose-1-phosphate dehydratase">
    <location>
        <begin position="1"/>
        <end position="206"/>
    </location>
</feature>
<feature type="binding site" evidence="1">
    <location>
        <position position="96"/>
    </location>
    <ligand>
        <name>Zn(2+)</name>
        <dbReference type="ChEBI" id="CHEBI:29105"/>
    </ligand>
</feature>
<feature type="binding site" evidence="1">
    <location>
        <position position="98"/>
    </location>
    <ligand>
        <name>Zn(2+)</name>
        <dbReference type="ChEBI" id="CHEBI:29105"/>
    </ligand>
</feature>
<dbReference type="EC" id="4.2.1.109" evidence="1"/>
<dbReference type="EMBL" id="CP001157">
    <property type="protein sequence ID" value="ACO78565.1"/>
    <property type="molecule type" value="Genomic_DNA"/>
</dbReference>
<dbReference type="RefSeq" id="WP_012700963.1">
    <property type="nucleotide sequence ID" value="NC_012560.1"/>
</dbReference>
<dbReference type="SMR" id="C1DHH0"/>
<dbReference type="STRING" id="322710.Avin_23780"/>
<dbReference type="EnsemblBacteria" id="ACO78565">
    <property type="protein sequence ID" value="ACO78565"/>
    <property type="gene ID" value="Avin_23780"/>
</dbReference>
<dbReference type="GeneID" id="88185561"/>
<dbReference type="KEGG" id="avn:Avin_23780"/>
<dbReference type="eggNOG" id="COG0235">
    <property type="taxonomic scope" value="Bacteria"/>
</dbReference>
<dbReference type="HOGENOM" id="CLU_006033_4_1_6"/>
<dbReference type="OrthoDB" id="9805559at2"/>
<dbReference type="UniPathway" id="UPA00904">
    <property type="reaction ID" value="UER00875"/>
</dbReference>
<dbReference type="Proteomes" id="UP000002424">
    <property type="component" value="Chromosome"/>
</dbReference>
<dbReference type="GO" id="GO:0005737">
    <property type="term" value="C:cytoplasm"/>
    <property type="evidence" value="ECO:0007669"/>
    <property type="project" value="InterPro"/>
</dbReference>
<dbReference type="GO" id="GO:0046570">
    <property type="term" value="F:methylthioribulose 1-phosphate dehydratase activity"/>
    <property type="evidence" value="ECO:0007669"/>
    <property type="project" value="UniProtKB-UniRule"/>
</dbReference>
<dbReference type="GO" id="GO:0008270">
    <property type="term" value="F:zinc ion binding"/>
    <property type="evidence" value="ECO:0007669"/>
    <property type="project" value="UniProtKB-UniRule"/>
</dbReference>
<dbReference type="GO" id="GO:0019509">
    <property type="term" value="P:L-methionine salvage from methylthioadenosine"/>
    <property type="evidence" value="ECO:0007669"/>
    <property type="project" value="UniProtKB-UniRule"/>
</dbReference>
<dbReference type="GO" id="GO:0005996">
    <property type="term" value="P:monosaccharide metabolic process"/>
    <property type="evidence" value="ECO:0007669"/>
    <property type="project" value="UniProtKB-ARBA"/>
</dbReference>
<dbReference type="Gene3D" id="3.40.225.10">
    <property type="entry name" value="Class II aldolase/adducin N-terminal domain"/>
    <property type="match status" value="1"/>
</dbReference>
<dbReference type="HAMAP" id="MF_01677">
    <property type="entry name" value="Salvage_MtnB"/>
    <property type="match status" value="1"/>
</dbReference>
<dbReference type="InterPro" id="IPR001303">
    <property type="entry name" value="Aldolase_II/adducin_N"/>
</dbReference>
<dbReference type="InterPro" id="IPR036409">
    <property type="entry name" value="Aldolase_II/adducin_N_sf"/>
</dbReference>
<dbReference type="InterPro" id="IPR017714">
    <property type="entry name" value="MethylthioRu-1-P_deHdtase_MtnB"/>
</dbReference>
<dbReference type="NCBIfam" id="NF006672">
    <property type="entry name" value="PRK09220.1"/>
    <property type="match status" value="1"/>
</dbReference>
<dbReference type="NCBIfam" id="TIGR03328">
    <property type="entry name" value="salvage_mtnB"/>
    <property type="match status" value="1"/>
</dbReference>
<dbReference type="PANTHER" id="PTHR10640">
    <property type="entry name" value="METHYLTHIORIBULOSE-1-PHOSPHATE DEHYDRATASE"/>
    <property type="match status" value="1"/>
</dbReference>
<dbReference type="PANTHER" id="PTHR10640:SF7">
    <property type="entry name" value="METHYLTHIORIBULOSE-1-PHOSPHATE DEHYDRATASE"/>
    <property type="match status" value="1"/>
</dbReference>
<dbReference type="Pfam" id="PF00596">
    <property type="entry name" value="Aldolase_II"/>
    <property type="match status" value="1"/>
</dbReference>
<dbReference type="SMART" id="SM01007">
    <property type="entry name" value="Aldolase_II"/>
    <property type="match status" value="1"/>
</dbReference>
<dbReference type="SUPFAM" id="SSF53639">
    <property type="entry name" value="AraD/HMP-PK domain-like"/>
    <property type="match status" value="1"/>
</dbReference>
<gene>
    <name evidence="1" type="primary">mtnB</name>
    <name type="ordered locus">Avin_23780</name>
</gene>
<proteinExistence type="inferred from homology"/>
<keyword id="KW-0028">Amino-acid biosynthesis</keyword>
<keyword id="KW-0456">Lyase</keyword>
<keyword id="KW-0479">Metal-binding</keyword>
<keyword id="KW-0486">Methionine biosynthesis</keyword>
<keyword id="KW-0862">Zinc</keyword>
<sequence>MSPTRAQLTRQIIEAGRFLYGRGWSPATSSNYSARLSPGEALLTVSGKHKGQLGEDDVLATDMAGNSLEPGKKPSAETLLHTQLYTWKTEIGAVLHTHSVNATVLSRLILSDSLVFADYELQKAFAGIGTHECQICVPIFDNDQDIARLASRVRPWLDEHPDCVGYLIRGHGLYTWGAAMNDALRQVEAFEFLFDCELKMRALQGR</sequence>
<evidence type="ECO:0000255" key="1">
    <source>
        <dbReference type="HAMAP-Rule" id="MF_01677"/>
    </source>
</evidence>
<name>MTNB_AZOVD</name>
<comment type="function">
    <text evidence="1">Catalyzes the dehydration of methylthioribulose-1-phosphate (MTRu-1-P) into 2,3-diketo-5-methylthiopentyl-1-phosphate (DK-MTP-1-P).</text>
</comment>
<comment type="catalytic activity">
    <reaction evidence="1">
        <text>5-(methylsulfanyl)-D-ribulose 1-phosphate = 5-methylsulfanyl-2,3-dioxopentyl phosphate + H2O</text>
        <dbReference type="Rhea" id="RHEA:15549"/>
        <dbReference type="ChEBI" id="CHEBI:15377"/>
        <dbReference type="ChEBI" id="CHEBI:58548"/>
        <dbReference type="ChEBI" id="CHEBI:58828"/>
        <dbReference type="EC" id="4.2.1.109"/>
    </reaction>
</comment>
<comment type="cofactor">
    <cofactor evidence="1">
        <name>Zn(2+)</name>
        <dbReference type="ChEBI" id="CHEBI:29105"/>
    </cofactor>
    <text evidence="1">Binds 1 zinc ion per subunit.</text>
</comment>
<comment type="pathway">
    <text evidence="1">Amino-acid biosynthesis; L-methionine biosynthesis via salvage pathway; L-methionine from S-methyl-5-thio-alpha-D-ribose 1-phosphate: step 2/6.</text>
</comment>
<comment type="similarity">
    <text evidence="1">Belongs to the aldolase class II family. MtnB subfamily.</text>
</comment>
<protein>
    <recommendedName>
        <fullName evidence="1">Methylthioribulose-1-phosphate dehydratase</fullName>
        <shortName evidence="1">MTRu-1-P dehydratase</shortName>
        <ecNumber evidence="1">4.2.1.109</ecNumber>
    </recommendedName>
</protein>
<reference key="1">
    <citation type="journal article" date="2009" name="J. Bacteriol.">
        <title>Genome sequence of Azotobacter vinelandii, an obligate aerobe specialized to support diverse anaerobic metabolic processes.</title>
        <authorList>
            <person name="Setubal J.C."/>
            <person name="Dos Santos P."/>
            <person name="Goldman B.S."/>
            <person name="Ertesvaag H."/>
            <person name="Espin G."/>
            <person name="Rubio L.M."/>
            <person name="Valla S."/>
            <person name="Almeida N.F."/>
            <person name="Balasubramanian D."/>
            <person name="Cromes L."/>
            <person name="Curatti L."/>
            <person name="Du Z."/>
            <person name="Godsy E."/>
            <person name="Goodner B."/>
            <person name="Hellner-Burris K."/>
            <person name="Hernandez J.A."/>
            <person name="Houmiel K."/>
            <person name="Imperial J."/>
            <person name="Kennedy C."/>
            <person name="Larson T.J."/>
            <person name="Latreille P."/>
            <person name="Ligon L.S."/>
            <person name="Lu J."/>
            <person name="Maerk M."/>
            <person name="Miller N.M."/>
            <person name="Norton S."/>
            <person name="O'Carroll I.P."/>
            <person name="Paulsen I."/>
            <person name="Raulfs E.C."/>
            <person name="Roemer R."/>
            <person name="Rosser J."/>
            <person name="Segura D."/>
            <person name="Slater S."/>
            <person name="Stricklin S.L."/>
            <person name="Studholme D.J."/>
            <person name="Sun J."/>
            <person name="Viana C.J."/>
            <person name="Wallin E."/>
            <person name="Wang B."/>
            <person name="Wheeler C."/>
            <person name="Zhu H."/>
            <person name="Dean D.R."/>
            <person name="Dixon R."/>
            <person name="Wood D."/>
        </authorList>
    </citation>
    <scope>NUCLEOTIDE SEQUENCE [LARGE SCALE GENOMIC DNA]</scope>
    <source>
        <strain>DJ / ATCC BAA-1303</strain>
    </source>
</reference>